<organism>
    <name type="scientific">Proteus mirabilis (strain HI4320)</name>
    <dbReference type="NCBI Taxonomy" id="529507"/>
    <lineage>
        <taxon>Bacteria</taxon>
        <taxon>Pseudomonadati</taxon>
        <taxon>Pseudomonadota</taxon>
        <taxon>Gammaproteobacteria</taxon>
        <taxon>Enterobacterales</taxon>
        <taxon>Morganellaceae</taxon>
        <taxon>Proteus</taxon>
    </lineage>
</organism>
<comment type="function">
    <text evidence="1">Catalyzes the hydrolytic deamination of adenosine and 2-deoxyadenosine.</text>
</comment>
<comment type="catalytic activity">
    <reaction evidence="1">
        <text>adenosine + H2O + H(+) = inosine + NH4(+)</text>
        <dbReference type="Rhea" id="RHEA:24408"/>
        <dbReference type="ChEBI" id="CHEBI:15377"/>
        <dbReference type="ChEBI" id="CHEBI:15378"/>
        <dbReference type="ChEBI" id="CHEBI:16335"/>
        <dbReference type="ChEBI" id="CHEBI:17596"/>
        <dbReference type="ChEBI" id="CHEBI:28938"/>
        <dbReference type="EC" id="3.5.4.4"/>
    </reaction>
    <physiologicalReaction direction="left-to-right" evidence="1">
        <dbReference type="Rhea" id="RHEA:24409"/>
    </physiologicalReaction>
</comment>
<comment type="catalytic activity">
    <reaction evidence="1">
        <text>2'-deoxyadenosine + H2O + H(+) = 2'-deoxyinosine + NH4(+)</text>
        <dbReference type="Rhea" id="RHEA:28190"/>
        <dbReference type="ChEBI" id="CHEBI:15377"/>
        <dbReference type="ChEBI" id="CHEBI:15378"/>
        <dbReference type="ChEBI" id="CHEBI:17256"/>
        <dbReference type="ChEBI" id="CHEBI:28938"/>
        <dbReference type="ChEBI" id="CHEBI:28997"/>
        <dbReference type="EC" id="3.5.4.4"/>
    </reaction>
    <physiologicalReaction direction="left-to-right" evidence="1">
        <dbReference type="Rhea" id="RHEA:28191"/>
    </physiologicalReaction>
</comment>
<comment type="cofactor">
    <cofactor evidence="1">
        <name>Zn(2+)</name>
        <dbReference type="ChEBI" id="CHEBI:29105"/>
    </cofactor>
    <text evidence="1">Binds 1 zinc ion per subunit.</text>
</comment>
<comment type="similarity">
    <text evidence="1">Belongs to the metallo-dependent hydrolases superfamily. Adenosine and AMP deaminases family. Adenosine deaminase subfamily.</text>
</comment>
<sequence>MIDTQLPLTDLHRHLDGNIRPETILDLAQQHNIALPAYELETLRPHVQITKNEPSLVSFLQKLDWGVAVLADLDACRRVAYENVVDVANAGIDYAELRFSPYYMAMKHQLPIEGVVEAIIDGVQSALHTYDVEIRLIGILSRTFGENACQQELNGLLKHQDKITALDLAGDELGFPGHLFQPHFNRARDTGWKITVHAGEAAGAESIWHAIKELGASRIGHGVKAIEDPRLMDYLAEHQIGIESCLTSNIQTSTIASLAQHPLKKFLEHGIIASLNTDDPAVEGIELKHEYTVAAPAAGLTAAQIRQAQINGLTMAFISQAERDALIKKVSLG</sequence>
<feature type="chain" id="PRO_1000128854" description="Adenosine deaminase">
    <location>
        <begin position="1"/>
        <end position="333"/>
    </location>
</feature>
<feature type="active site" description="Proton donor" evidence="1">
    <location>
        <position position="200"/>
    </location>
</feature>
<feature type="binding site" evidence="1">
    <location>
        <position position="12"/>
    </location>
    <ligand>
        <name>Zn(2+)</name>
        <dbReference type="ChEBI" id="CHEBI:29105"/>
        <note>catalytic</note>
    </ligand>
</feature>
<feature type="binding site" evidence="1">
    <location>
        <position position="14"/>
    </location>
    <ligand>
        <name>substrate</name>
    </ligand>
</feature>
<feature type="binding site" evidence="1">
    <location>
        <position position="14"/>
    </location>
    <ligand>
        <name>Zn(2+)</name>
        <dbReference type="ChEBI" id="CHEBI:29105"/>
        <note>catalytic</note>
    </ligand>
</feature>
<feature type="binding site" evidence="1">
    <location>
        <position position="16"/>
    </location>
    <ligand>
        <name>substrate</name>
    </ligand>
</feature>
<feature type="binding site" evidence="1">
    <location>
        <position position="170"/>
    </location>
    <ligand>
        <name>substrate</name>
    </ligand>
</feature>
<feature type="binding site" evidence="1">
    <location>
        <position position="197"/>
    </location>
    <ligand>
        <name>Zn(2+)</name>
        <dbReference type="ChEBI" id="CHEBI:29105"/>
        <note>catalytic</note>
    </ligand>
</feature>
<feature type="binding site" evidence="1">
    <location>
        <position position="278"/>
    </location>
    <ligand>
        <name>Zn(2+)</name>
        <dbReference type="ChEBI" id="CHEBI:29105"/>
        <note>catalytic</note>
    </ligand>
</feature>
<feature type="binding site" evidence="1">
    <location>
        <position position="279"/>
    </location>
    <ligand>
        <name>substrate</name>
    </ligand>
</feature>
<feature type="site" description="Important for catalytic activity" evidence="1">
    <location>
        <position position="221"/>
    </location>
</feature>
<proteinExistence type="inferred from homology"/>
<accession>B4EVZ1</accession>
<gene>
    <name evidence="1" type="primary">add</name>
    <name type="ordered locus">PMI1300</name>
</gene>
<reference key="1">
    <citation type="journal article" date="2008" name="J. Bacteriol.">
        <title>Complete genome sequence of uropathogenic Proteus mirabilis, a master of both adherence and motility.</title>
        <authorList>
            <person name="Pearson M.M."/>
            <person name="Sebaihia M."/>
            <person name="Churcher C."/>
            <person name="Quail M.A."/>
            <person name="Seshasayee A.S."/>
            <person name="Luscombe N.M."/>
            <person name="Abdellah Z."/>
            <person name="Arrosmith C."/>
            <person name="Atkin B."/>
            <person name="Chillingworth T."/>
            <person name="Hauser H."/>
            <person name="Jagels K."/>
            <person name="Moule S."/>
            <person name="Mungall K."/>
            <person name="Norbertczak H."/>
            <person name="Rabbinowitsch E."/>
            <person name="Walker D."/>
            <person name="Whithead S."/>
            <person name="Thomson N.R."/>
            <person name="Rather P.N."/>
            <person name="Parkhill J."/>
            <person name="Mobley H.L.T."/>
        </authorList>
    </citation>
    <scope>NUCLEOTIDE SEQUENCE [LARGE SCALE GENOMIC DNA]</scope>
    <source>
        <strain>HI4320</strain>
    </source>
</reference>
<protein>
    <recommendedName>
        <fullName evidence="1">Adenosine deaminase</fullName>
        <ecNumber evidence="1">3.5.4.4</ecNumber>
    </recommendedName>
    <alternativeName>
        <fullName evidence="1">Adenosine aminohydrolase</fullName>
    </alternativeName>
</protein>
<name>ADD_PROMH</name>
<evidence type="ECO:0000255" key="1">
    <source>
        <dbReference type="HAMAP-Rule" id="MF_00540"/>
    </source>
</evidence>
<dbReference type="EC" id="3.5.4.4" evidence="1"/>
<dbReference type="EMBL" id="AM942759">
    <property type="protein sequence ID" value="CAR42763.1"/>
    <property type="molecule type" value="Genomic_DNA"/>
</dbReference>
<dbReference type="RefSeq" id="WP_004248098.1">
    <property type="nucleotide sequence ID" value="NC_010554.1"/>
</dbReference>
<dbReference type="SMR" id="B4EVZ1"/>
<dbReference type="EnsemblBacteria" id="CAR42763">
    <property type="protein sequence ID" value="CAR42763"/>
    <property type="gene ID" value="PMI1300"/>
</dbReference>
<dbReference type="GeneID" id="6803469"/>
<dbReference type="KEGG" id="pmr:PMI1300"/>
<dbReference type="eggNOG" id="COG1816">
    <property type="taxonomic scope" value="Bacteria"/>
</dbReference>
<dbReference type="HOGENOM" id="CLU_039228_0_2_6"/>
<dbReference type="Proteomes" id="UP000008319">
    <property type="component" value="Chromosome"/>
</dbReference>
<dbReference type="GO" id="GO:0005829">
    <property type="term" value="C:cytosol"/>
    <property type="evidence" value="ECO:0007669"/>
    <property type="project" value="TreeGrafter"/>
</dbReference>
<dbReference type="GO" id="GO:0046936">
    <property type="term" value="F:2'-deoxyadenosine deaminase activity"/>
    <property type="evidence" value="ECO:0007669"/>
    <property type="project" value="RHEA"/>
</dbReference>
<dbReference type="GO" id="GO:0004000">
    <property type="term" value="F:adenosine deaminase activity"/>
    <property type="evidence" value="ECO:0007669"/>
    <property type="project" value="UniProtKB-UniRule"/>
</dbReference>
<dbReference type="GO" id="GO:0008270">
    <property type="term" value="F:zinc ion binding"/>
    <property type="evidence" value="ECO:0007669"/>
    <property type="project" value="UniProtKB-UniRule"/>
</dbReference>
<dbReference type="GO" id="GO:0006154">
    <property type="term" value="P:adenosine catabolic process"/>
    <property type="evidence" value="ECO:0007669"/>
    <property type="project" value="TreeGrafter"/>
</dbReference>
<dbReference type="GO" id="GO:0043103">
    <property type="term" value="P:hypoxanthine salvage"/>
    <property type="evidence" value="ECO:0007669"/>
    <property type="project" value="TreeGrafter"/>
</dbReference>
<dbReference type="GO" id="GO:0046103">
    <property type="term" value="P:inosine biosynthetic process"/>
    <property type="evidence" value="ECO:0007669"/>
    <property type="project" value="TreeGrafter"/>
</dbReference>
<dbReference type="GO" id="GO:0009117">
    <property type="term" value="P:nucleotide metabolic process"/>
    <property type="evidence" value="ECO:0007669"/>
    <property type="project" value="UniProtKB-KW"/>
</dbReference>
<dbReference type="GO" id="GO:0009168">
    <property type="term" value="P:purine ribonucleoside monophosphate biosynthetic process"/>
    <property type="evidence" value="ECO:0007669"/>
    <property type="project" value="UniProtKB-UniRule"/>
</dbReference>
<dbReference type="FunFam" id="3.20.20.140:FF:000009">
    <property type="entry name" value="Adenosine deaminase"/>
    <property type="match status" value="1"/>
</dbReference>
<dbReference type="Gene3D" id="3.20.20.140">
    <property type="entry name" value="Metal-dependent hydrolases"/>
    <property type="match status" value="1"/>
</dbReference>
<dbReference type="HAMAP" id="MF_00540">
    <property type="entry name" value="A_deaminase"/>
    <property type="match status" value="1"/>
</dbReference>
<dbReference type="InterPro" id="IPR006650">
    <property type="entry name" value="A/AMP_deam_AS"/>
</dbReference>
<dbReference type="InterPro" id="IPR028893">
    <property type="entry name" value="A_deaminase"/>
</dbReference>
<dbReference type="InterPro" id="IPR001365">
    <property type="entry name" value="A_deaminase_dom"/>
</dbReference>
<dbReference type="InterPro" id="IPR006330">
    <property type="entry name" value="Ado/ade_deaminase"/>
</dbReference>
<dbReference type="InterPro" id="IPR032466">
    <property type="entry name" value="Metal_Hydrolase"/>
</dbReference>
<dbReference type="NCBIfam" id="TIGR01430">
    <property type="entry name" value="aden_deam"/>
    <property type="match status" value="1"/>
</dbReference>
<dbReference type="NCBIfam" id="NF006846">
    <property type="entry name" value="PRK09358.1-1"/>
    <property type="match status" value="1"/>
</dbReference>
<dbReference type="PANTHER" id="PTHR11409">
    <property type="entry name" value="ADENOSINE DEAMINASE"/>
    <property type="match status" value="1"/>
</dbReference>
<dbReference type="PANTHER" id="PTHR11409:SF43">
    <property type="entry name" value="ADENOSINE DEAMINASE"/>
    <property type="match status" value="1"/>
</dbReference>
<dbReference type="Pfam" id="PF00962">
    <property type="entry name" value="A_deaminase"/>
    <property type="match status" value="1"/>
</dbReference>
<dbReference type="SUPFAM" id="SSF51556">
    <property type="entry name" value="Metallo-dependent hydrolases"/>
    <property type="match status" value="1"/>
</dbReference>
<dbReference type="PROSITE" id="PS00485">
    <property type="entry name" value="A_DEAMINASE"/>
    <property type="match status" value="1"/>
</dbReference>
<keyword id="KW-0378">Hydrolase</keyword>
<keyword id="KW-0479">Metal-binding</keyword>
<keyword id="KW-0546">Nucleotide metabolism</keyword>
<keyword id="KW-1185">Reference proteome</keyword>
<keyword id="KW-0862">Zinc</keyword>